<proteinExistence type="evidence at protein level"/>
<comment type="function">
    <text evidence="4">SIII, also known as elongin, is a general transcription elongation factor that increases the RNA polymerase II transcription elongation past template-encoded arresting sites. Subunit A is transcriptionally active and its transcription activity is strongly enhanced by binding to the dimeric complex of the SIII regulatory subunits B and C (elongin BC complex).</text>
</comment>
<comment type="subunit">
    <text evidence="5">Heterotrimer of an A, B and C subunit.</text>
</comment>
<comment type="subcellular location">
    <subcellularLocation>
        <location evidence="1">Nucleus</location>
    </subcellularLocation>
</comment>
<comment type="domain">
    <text evidence="1">The BC-box, which mediates binding to the elongin BC complex, has the consensus [APST]-L-x(3)-C-x(3)-[AILV].</text>
</comment>
<organism>
    <name type="scientific">Caenorhabditis elegans</name>
    <dbReference type="NCBI Taxonomy" id="6239"/>
    <lineage>
        <taxon>Eukaryota</taxon>
        <taxon>Metazoa</taxon>
        <taxon>Ecdysozoa</taxon>
        <taxon>Nematoda</taxon>
        <taxon>Chromadorea</taxon>
        <taxon>Rhabditida</taxon>
        <taxon>Rhabditina</taxon>
        <taxon>Rhabditomorpha</taxon>
        <taxon>Rhabditoidea</taxon>
        <taxon>Rhabditidae</taxon>
        <taxon>Peloderinae</taxon>
        <taxon>Caenorhabditis</taxon>
    </lineage>
</organism>
<sequence length="434" mass="49240">MPETDEEKVRRYTECLMNGIDPKRALKRLYDLNVSPEVFKSADTYQCVKRYESSPELAKYAKRVRDKLLGGRKREKGGGEDDADIEHTALKKAKKEEVNLDEEFAEAMKSGVSAQASSAPRATVDYSKYKVVKRVEVKVEPKPEPVDVHEQQASSSSMSYQREHQKDYAPVVPTCKPSGQPKKAIPQSKSLHADENMFKPRKERQKVFAGRRKRVGEGVSTLVSLCQTVLMSHIDMIDHVGIVPFDLLKPVLDHASTDQLRHILDVNPMLVEDADEMFHEMVSREFPKYANREKSGWTWREMYDRLVEKKQKKENDKLEMLTSRIGKSNSAQSQGRQTMVIDMAHTRVRSKSFFNTVKDSQVKMSATPSALQLSQARKNVKIEGKAQLRTITPRGGGVPSTSRSRSNNNNNMNNGLVVKKTAPLMAKCKKMLKR</sequence>
<keyword id="KW-0539">Nucleus</keyword>
<keyword id="KW-1185">Reference proteome</keyword>
<keyword id="KW-0804">Transcription</keyword>
<keyword id="KW-0805">Transcription regulation</keyword>
<name>ELOA1_CAEEL</name>
<reference key="1">
    <citation type="journal article" date="1998" name="Science">
        <title>Genome sequence of the nematode C. elegans: a platform for investigating biology.</title>
        <authorList>
            <consortium name="The C. elegans sequencing consortium"/>
        </authorList>
    </citation>
    <scope>NUCLEOTIDE SEQUENCE [LARGE SCALE GENOMIC DNA]</scope>
    <source>
        <strain>Bristol N2</strain>
    </source>
</reference>
<reference key="2">
    <citation type="journal article" date="1996" name="EMBO J.">
        <title>The inducible elongin A elongation activation domain: structure, function and interaction with the elongin BC complex.</title>
        <authorList>
            <person name="Aso T."/>
            <person name="Haque D."/>
            <person name="Barstead R.J."/>
            <person name="Conaway R.C."/>
            <person name="Conaway J.W."/>
        </authorList>
    </citation>
    <scope>FUNCTION</scope>
    <scope>SUBUNIT</scope>
    <scope>MUTAGENESIS OF 1-MET--LYS-201 AND 1-MET--LYS-93</scope>
</reference>
<evidence type="ECO:0000250" key="1">
    <source>
        <dbReference type="UniProtKB" id="Q63187"/>
    </source>
</evidence>
<evidence type="ECO:0000255" key="2">
    <source>
        <dbReference type="PROSITE-ProRule" id="PRU00080"/>
    </source>
</evidence>
<evidence type="ECO:0000256" key="3">
    <source>
        <dbReference type="SAM" id="MobiDB-lite"/>
    </source>
</evidence>
<evidence type="ECO:0000269" key="4">
    <source>
    </source>
</evidence>
<evidence type="ECO:0000305" key="5">
    <source>
    </source>
</evidence>
<evidence type="ECO:0000312" key="6">
    <source>
        <dbReference type="WormBase" id="R03D7.4"/>
    </source>
</evidence>
<protein>
    <recommendedName>
        <fullName>Transcription elongation factor B polypeptide 3</fullName>
    </recommendedName>
    <alternativeName>
        <fullName>Elongin-A</fullName>
    </alternativeName>
    <alternativeName>
        <fullName>RNA polymerase II transcription factor SIII subunit A</fullName>
    </alternativeName>
</protein>
<dbReference type="EMBL" id="BX284602">
    <property type="protein sequence ID" value="CAA86857.1"/>
    <property type="molecule type" value="Genomic_DNA"/>
</dbReference>
<dbReference type="PIR" id="D88305">
    <property type="entry name" value="D88305"/>
</dbReference>
<dbReference type="PIR" id="S72430">
    <property type="entry name" value="S72430"/>
</dbReference>
<dbReference type="RefSeq" id="NP_496355.1">
    <property type="nucleotide sequence ID" value="NM_063954.8"/>
</dbReference>
<dbReference type="SMR" id="Q09413"/>
<dbReference type="BioGRID" id="39993">
    <property type="interactions" value="3"/>
</dbReference>
<dbReference type="FunCoup" id="Q09413">
    <property type="interactions" value="31"/>
</dbReference>
<dbReference type="IntAct" id="Q09413">
    <property type="interactions" value="2"/>
</dbReference>
<dbReference type="STRING" id="6239.R03D7.4.1"/>
<dbReference type="PaxDb" id="6239-R03D7.4"/>
<dbReference type="PeptideAtlas" id="Q09413"/>
<dbReference type="EnsemblMetazoa" id="R03D7.4.1">
    <property type="protein sequence ID" value="R03D7.4.1"/>
    <property type="gene ID" value="WBGene00010990"/>
</dbReference>
<dbReference type="EnsemblMetazoa" id="R03D7.4.2">
    <property type="protein sequence ID" value="R03D7.4.2"/>
    <property type="gene ID" value="WBGene00010990"/>
</dbReference>
<dbReference type="GeneID" id="174683"/>
<dbReference type="KEGG" id="cel:CELE_R03D7.4"/>
<dbReference type="UCSC" id="R03D7.4">
    <property type="organism name" value="c. elegans"/>
</dbReference>
<dbReference type="AGR" id="WB:WBGene00010990"/>
<dbReference type="CTD" id="174683"/>
<dbReference type="WormBase" id="R03D7.4">
    <property type="protein sequence ID" value="CE01611"/>
    <property type="gene ID" value="WBGene00010990"/>
    <property type="gene designation" value="tceb-3"/>
</dbReference>
<dbReference type="eggNOG" id="KOG2821">
    <property type="taxonomic scope" value="Eukaryota"/>
</dbReference>
<dbReference type="GeneTree" id="ENSGT00390000002428"/>
<dbReference type="HOGENOM" id="CLU_636539_0_0_1"/>
<dbReference type="InParanoid" id="Q09413"/>
<dbReference type="OMA" id="EVGDTPY"/>
<dbReference type="OrthoDB" id="21513at2759"/>
<dbReference type="PhylomeDB" id="Q09413"/>
<dbReference type="Reactome" id="R-CEL-112382">
    <property type="pathway name" value="Formation of RNA Pol II elongation complex"/>
</dbReference>
<dbReference type="Reactome" id="R-CEL-674695">
    <property type="pathway name" value="RNA Polymerase II Pre-transcription Events"/>
</dbReference>
<dbReference type="Reactome" id="R-CEL-6796648">
    <property type="pathway name" value="TP53 Regulates Transcription of DNA Repair Genes"/>
</dbReference>
<dbReference type="Reactome" id="R-CEL-75955">
    <property type="pathway name" value="RNA Polymerase II Transcription Elongation"/>
</dbReference>
<dbReference type="PRO" id="PR:Q09413"/>
<dbReference type="Proteomes" id="UP000001940">
    <property type="component" value="Chromosome II"/>
</dbReference>
<dbReference type="Bgee" id="WBGene00010990">
    <property type="expression patterns" value="Expressed in embryo and 4 other cell types or tissues"/>
</dbReference>
<dbReference type="GO" id="GO:0070449">
    <property type="term" value="C:elongin complex"/>
    <property type="evidence" value="ECO:0007669"/>
    <property type="project" value="InterPro"/>
</dbReference>
<dbReference type="GO" id="GO:0008023">
    <property type="term" value="C:transcription elongation factor complex"/>
    <property type="evidence" value="ECO:0000314"/>
    <property type="project" value="UniProtKB"/>
</dbReference>
<dbReference type="GO" id="GO:0006368">
    <property type="term" value="P:transcription elongation by RNA polymerase II"/>
    <property type="evidence" value="ECO:0000314"/>
    <property type="project" value="UniProtKB"/>
</dbReference>
<dbReference type="Gene3D" id="6.10.250.3180">
    <property type="match status" value="1"/>
</dbReference>
<dbReference type="InterPro" id="IPR051870">
    <property type="entry name" value="Elongin-A_domain"/>
</dbReference>
<dbReference type="InterPro" id="IPR010684">
    <property type="entry name" value="RNA_pol_II_trans_fac_SIII_A"/>
</dbReference>
<dbReference type="PANTHER" id="PTHR15141">
    <property type="entry name" value="TRANSCRIPTION ELONGATION FACTOR B POLYPEPTIDE 3"/>
    <property type="match status" value="1"/>
</dbReference>
<dbReference type="PANTHER" id="PTHR15141:SF76">
    <property type="entry name" value="TRANSCRIPTION ELONGATION FACTOR B POLYPEPTIDE 3"/>
    <property type="match status" value="1"/>
</dbReference>
<dbReference type="Pfam" id="PF06881">
    <property type="entry name" value="Elongin_A"/>
    <property type="match status" value="1"/>
</dbReference>
<accession>Q09413</accession>
<gene>
    <name evidence="6" type="primary">tceb-3</name>
    <name evidence="6" type="ORF">R03D7.4</name>
</gene>
<feature type="chain" id="PRO_0000086958" description="Transcription elongation factor B polypeptide 3">
    <location>
        <begin position="1"/>
        <end position="434"/>
    </location>
</feature>
<feature type="domain" description="F-box" evidence="2">
    <location>
        <begin position="237"/>
        <end position="281"/>
    </location>
</feature>
<feature type="region of interest" description="Disordered" evidence="3">
    <location>
        <begin position="142"/>
        <end position="161"/>
    </location>
</feature>
<feature type="region of interest" description="BC box" evidence="1">
    <location>
        <begin position="221"/>
        <end position="230"/>
    </location>
</feature>
<feature type="region of interest" description="Disordered" evidence="3">
    <location>
        <begin position="391"/>
        <end position="415"/>
    </location>
</feature>
<feature type="compositionally biased region" description="Polar residues" evidence="3">
    <location>
        <begin position="151"/>
        <end position="160"/>
    </location>
</feature>
<feature type="mutagenesis site" description="Reduces ability to stimulate elongation by rat RNA polymerase II." evidence="4">
    <location>
        <begin position="1"/>
        <end position="201"/>
    </location>
</feature>
<feature type="mutagenesis site" description="Stimulates elongation by rat RNA polymerase II with the same activity as wild-type." evidence="4">
    <location>
        <begin position="1"/>
        <end position="93"/>
    </location>
</feature>